<evidence type="ECO:0000255" key="1">
    <source>
        <dbReference type="HAMAP-Rule" id="MF_00197"/>
    </source>
</evidence>
<accession>B0BRC5</accession>
<comment type="function">
    <text evidence="1">Catalyzes the stereoinversion of LL-2,6-diaminopimelate (L,L-DAP) to meso-diaminopimelate (meso-DAP), a precursor of L-lysine and an essential component of the bacterial peptidoglycan.</text>
</comment>
<comment type="catalytic activity">
    <reaction evidence="1">
        <text>(2S,6S)-2,6-diaminopimelate = meso-2,6-diaminopimelate</text>
        <dbReference type="Rhea" id="RHEA:15393"/>
        <dbReference type="ChEBI" id="CHEBI:57609"/>
        <dbReference type="ChEBI" id="CHEBI:57791"/>
        <dbReference type="EC" id="5.1.1.7"/>
    </reaction>
</comment>
<comment type="pathway">
    <text evidence="1">Amino-acid biosynthesis; L-lysine biosynthesis via DAP pathway; DL-2,6-diaminopimelate from LL-2,6-diaminopimelate: step 1/1.</text>
</comment>
<comment type="subunit">
    <text evidence="1">Homodimer.</text>
</comment>
<comment type="subcellular location">
    <subcellularLocation>
        <location evidence="1">Cytoplasm</location>
    </subcellularLocation>
</comment>
<comment type="similarity">
    <text evidence="1">Belongs to the diaminopimelate epimerase family.</text>
</comment>
<name>DAPF_ACTPJ</name>
<organism>
    <name type="scientific">Actinobacillus pleuropneumoniae serotype 3 (strain JL03)</name>
    <dbReference type="NCBI Taxonomy" id="434271"/>
    <lineage>
        <taxon>Bacteria</taxon>
        <taxon>Pseudomonadati</taxon>
        <taxon>Pseudomonadota</taxon>
        <taxon>Gammaproteobacteria</taxon>
        <taxon>Pasteurellales</taxon>
        <taxon>Pasteurellaceae</taxon>
        <taxon>Actinobacillus</taxon>
    </lineage>
</organism>
<keyword id="KW-0028">Amino-acid biosynthesis</keyword>
<keyword id="KW-0963">Cytoplasm</keyword>
<keyword id="KW-0413">Isomerase</keyword>
<keyword id="KW-0457">Lysine biosynthesis</keyword>
<gene>
    <name evidence="1" type="primary">dapF</name>
    <name type="ordered locus">APJL_1558</name>
</gene>
<reference key="1">
    <citation type="journal article" date="2008" name="PLoS ONE">
        <title>Genome biology of Actinobacillus pleuropneumoniae JL03, an isolate of serotype 3 prevalent in China.</title>
        <authorList>
            <person name="Xu Z."/>
            <person name="Zhou Y."/>
            <person name="Li L."/>
            <person name="Zhou R."/>
            <person name="Xiao S."/>
            <person name="Wan Y."/>
            <person name="Zhang S."/>
            <person name="Wang K."/>
            <person name="Li W."/>
            <person name="Li L."/>
            <person name="Jin H."/>
            <person name="Kang M."/>
            <person name="Dalai B."/>
            <person name="Li T."/>
            <person name="Liu L."/>
            <person name="Cheng Y."/>
            <person name="Zhang L."/>
            <person name="Xu T."/>
            <person name="Zheng H."/>
            <person name="Pu S."/>
            <person name="Wang B."/>
            <person name="Gu W."/>
            <person name="Zhang X.L."/>
            <person name="Zhu G.-F."/>
            <person name="Wang S."/>
            <person name="Zhao G.-P."/>
            <person name="Chen H."/>
        </authorList>
    </citation>
    <scope>NUCLEOTIDE SEQUENCE [LARGE SCALE GENOMIC DNA]</scope>
    <source>
        <strain>JL03</strain>
    </source>
</reference>
<sequence>MQFSKMHGLGNDFMVIDGVTQNVYLTEEVIRKLADRHRGVGFDQLLLVEPPYDPELDFHYRIFNADGSEVAQCGNGARCFARFVTLKGLTNKQDIHVSTAKGKMVLTLKDEEKVRVNMGEPIWEPAQVPFTANKFEKNYILRTDLQTVLCGVVSMGNPHCVLQVEDINLTPVNELGPLLENHERFPERANIGFMQVVNRNHIKLRVFERGAGETQACGSGACGAVAVGIMQGVLDNNVQVDLSGGSLQIEWEGVGHPLYMTGDATHIYDGFIKL</sequence>
<proteinExistence type="inferred from homology"/>
<feature type="chain" id="PRO_1000099217" description="Diaminopimelate epimerase">
    <location>
        <begin position="1"/>
        <end position="274"/>
    </location>
</feature>
<feature type="active site" description="Proton donor" evidence="1">
    <location>
        <position position="73"/>
    </location>
</feature>
<feature type="active site" description="Proton acceptor" evidence="1">
    <location>
        <position position="217"/>
    </location>
</feature>
<feature type="binding site" evidence="1">
    <location>
        <position position="11"/>
    </location>
    <ligand>
        <name>substrate</name>
    </ligand>
</feature>
<feature type="binding site" evidence="1">
    <location>
        <position position="44"/>
    </location>
    <ligand>
        <name>substrate</name>
    </ligand>
</feature>
<feature type="binding site" evidence="1">
    <location>
        <position position="64"/>
    </location>
    <ligand>
        <name>substrate</name>
    </ligand>
</feature>
<feature type="binding site" evidence="1">
    <location>
        <begin position="74"/>
        <end position="75"/>
    </location>
    <ligand>
        <name>substrate</name>
    </ligand>
</feature>
<feature type="binding site" evidence="1">
    <location>
        <position position="157"/>
    </location>
    <ligand>
        <name>substrate</name>
    </ligand>
</feature>
<feature type="binding site" evidence="1">
    <location>
        <position position="190"/>
    </location>
    <ligand>
        <name>substrate</name>
    </ligand>
</feature>
<feature type="binding site" evidence="1">
    <location>
        <begin position="208"/>
        <end position="209"/>
    </location>
    <ligand>
        <name>substrate</name>
    </ligand>
</feature>
<feature type="binding site" evidence="1">
    <location>
        <begin position="218"/>
        <end position="219"/>
    </location>
    <ligand>
        <name>substrate</name>
    </ligand>
</feature>
<feature type="site" description="Could be important to modulate the pK values of the two catalytic cysteine residues" evidence="1">
    <location>
        <position position="159"/>
    </location>
</feature>
<feature type="site" description="Could be important to modulate the pK values of the two catalytic cysteine residues" evidence="1">
    <location>
        <position position="208"/>
    </location>
</feature>
<feature type="site" description="Important for dimerization" evidence="1">
    <location>
        <position position="268"/>
    </location>
</feature>
<protein>
    <recommendedName>
        <fullName evidence="1">Diaminopimelate epimerase</fullName>
        <shortName evidence="1">DAP epimerase</shortName>
        <ecNumber evidence="1">5.1.1.7</ecNumber>
    </recommendedName>
    <alternativeName>
        <fullName evidence="1">PLP-independent amino acid racemase</fullName>
    </alternativeName>
</protein>
<dbReference type="EC" id="5.1.1.7" evidence="1"/>
<dbReference type="EMBL" id="CP000687">
    <property type="protein sequence ID" value="ABY70110.1"/>
    <property type="molecule type" value="Genomic_DNA"/>
</dbReference>
<dbReference type="RefSeq" id="WP_012263271.1">
    <property type="nucleotide sequence ID" value="NC_010278.1"/>
</dbReference>
<dbReference type="SMR" id="B0BRC5"/>
<dbReference type="KEGG" id="apj:APJL_1558"/>
<dbReference type="HOGENOM" id="CLU_053306_1_1_6"/>
<dbReference type="UniPathway" id="UPA00034">
    <property type="reaction ID" value="UER00025"/>
</dbReference>
<dbReference type="Proteomes" id="UP000008547">
    <property type="component" value="Chromosome"/>
</dbReference>
<dbReference type="GO" id="GO:0005829">
    <property type="term" value="C:cytosol"/>
    <property type="evidence" value="ECO:0007669"/>
    <property type="project" value="TreeGrafter"/>
</dbReference>
<dbReference type="GO" id="GO:0008837">
    <property type="term" value="F:diaminopimelate epimerase activity"/>
    <property type="evidence" value="ECO:0007669"/>
    <property type="project" value="UniProtKB-UniRule"/>
</dbReference>
<dbReference type="GO" id="GO:0009089">
    <property type="term" value="P:lysine biosynthetic process via diaminopimelate"/>
    <property type="evidence" value="ECO:0007669"/>
    <property type="project" value="UniProtKB-UniRule"/>
</dbReference>
<dbReference type="FunFam" id="3.10.310.10:FF:000001">
    <property type="entry name" value="Diaminopimelate epimerase"/>
    <property type="match status" value="1"/>
</dbReference>
<dbReference type="FunFam" id="3.10.310.10:FF:000002">
    <property type="entry name" value="Diaminopimelate epimerase"/>
    <property type="match status" value="1"/>
</dbReference>
<dbReference type="Gene3D" id="3.10.310.10">
    <property type="entry name" value="Diaminopimelate Epimerase, Chain A, domain 1"/>
    <property type="match status" value="2"/>
</dbReference>
<dbReference type="HAMAP" id="MF_00197">
    <property type="entry name" value="DAP_epimerase"/>
    <property type="match status" value="1"/>
</dbReference>
<dbReference type="InterPro" id="IPR018510">
    <property type="entry name" value="DAP_epimerase_AS"/>
</dbReference>
<dbReference type="InterPro" id="IPR001653">
    <property type="entry name" value="DAP_epimerase_DapF"/>
</dbReference>
<dbReference type="NCBIfam" id="TIGR00652">
    <property type="entry name" value="DapF"/>
    <property type="match status" value="1"/>
</dbReference>
<dbReference type="PANTHER" id="PTHR31689:SF0">
    <property type="entry name" value="DIAMINOPIMELATE EPIMERASE"/>
    <property type="match status" value="1"/>
</dbReference>
<dbReference type="PANTHER" id="PTHR31689">
    <property type="entry name" value="DIAMINOPIMELATE EPIMERASE, CHLOROPLASTIC"/>
    <property type="match status" value="1"/>
</dbReference>
<dbReference type="Pfam" id="PF01678">
    <property type="entry name" value="DAP_epimerase"/>
    <property type="match status" value="2"/>
</dbReference>
<dbReference type="SUPFAM" id="SSF54506">
    <property type="entry name" value="Diaminopimelate epimerase-like"/>
    <property type="match status" value="1"/>
</dbReference>
<dbReference type="PROSITE" id="PS01326">
    <property type="entry name" value="DAP_EPIMERASE"/>
    <property type="match status" value="1"/>
</dbReference>